<feature type="chain" id="PRO_0000048126" description="Tubulin alpha-1A chain">
    <location>
        <begin position="1"/>
        <end position="451"/>
    </location>
</feature>
<feature type="chain" id="PRO_0000437382" description="Detyrosinated tubulin alpha-1A chain" evidence="4">
    <location>
        <begin position="1"/>
        <end position="450"/>
    </location>
</feature>
<feature type="region of interest" description="Disordered" evidence="5">
    <location>
        <begin position="432"/>
        <end position="451"/>
    </location>
</feature>
<feature type="active site" evidence="1">
    <location>
        <position position="254"/>
    </location>
</feature>
<feature type="binding site" evidence="1">
    <location>
        <position position="10"/>
    </location>
    <ligand>
        <name>GTP</name>
        <dbReference type="ChEBI" id="CHEBI:37565"/>
    </ligand>
</feature>
<feature type="binding site" evidence="1">
    <location>
        <position position="11"/>
    </location>
    <ligand>
        <name>GTP</name>
        <dbReference type="ChEBI" id="CHEBI:37565"/>
    </ligand>
</feature>
<feature type="binding site" evidence="1">
    <location>
        <position position="12"/>
    </location>
    <ligand>
        <name>GTP</name>
        <dbReference type="ChEBI" id="CHEBI:37565"/>
    </ligand>
</feature>
<feature type="binding site" evidence="1">
    <location>
        <position position="15"/>
    </location>
    <ligand>
        <name>GTP</name>
        <dbReference type="ChEBI" id="CHEBI:37565"/>
    </ligand>
</feature>
<feature type="binding site" evidence="1">
    <location>
        <position position="71"/>
    </location>
    <ligand>
        <name>GTP</name>
        <dbReference type="ChEBI" id="CHEBI:37565"/>
    </ligand>
</feature>
<feature type="binding site" evidence="1">
    <location>
        <position position="71"/>
    </location>
    <ligand>
        <name>Mg(2+)</name>
        <dbReference type="ChEBI" id="CHEBI:18420"/>
    </ligand>
</feature>
<feature type="binding site" evidence="1">
    <location>
        <position position="99"/>
    </location>
    <ligand>
        <name>GTP</name>
        <dbReference type="ChEBI" id="CHEBI:37565"/>
    </ligand>
</feature>
<feature type="binding site" evidence="1">
    <location>
        <position position="140"/>
    </location>
    <ligand>
        <name>GTP</name>
        <dbReference type="ChEBI" id="CHEBI:37565"/>
    </ligand>
</feature>
<feature type="binding site" evidence="1">
    <location>
        <position position="143"/>
    </location>
    <ligand>
        <name>GTP</name>
        <dbReference type="ChEBI" id="CHEBI:37565"/>
    </ligand>
</feature>
<feature type="binding site" evidence="1">
    <location>
        <position position="144"/>
    </location>
    <ligand>
        <name>GTP</name>
        <dbReference type="ChEBI" id="CHEBI:37565"/>
    </ligand>
</feature>
<feature type="binding site" evidence="1">
    <location>
        <position position="145"/>
    </location>
    <ligand>
        <name>GTP</name>
        <dbReference type="ChEBI" id="CHEBI:37565"/>
    </ligand>
</feature>
<feature type="binding site" evidence="1">
    <location>
        <position position="146"/>
    </location>
    <ligand>
        <name>GTP</name>
        <dbReference type="ChEBI" id="CHEBI:37565"/>
    </ligand>
</feature>
<feature type="binding site" evidence="1">
    <location>
        <position position="179"/>
    </location>
    <ligand>
        <name>GTP</name>
        <dbReference type="ChEBI" id="CHEBI:37565"/>
    </ligand>
</feature>
<feature type="binding site" evidence="1">
    <location>
        <position position="183"/>
    </location>
    <ligand>
        <name>GTP</name>
        <dbReference type="ChEBI" id="CHEBI:37565"/>
    </ligand>
</feature>
<feature type="binding site" evidence="1">
    <location>
        <position position="206"/>
    </location>
    <ligand>
        <name>GTP</name>
        <dbReference type="ChEBI" id="CHEBI:37565"/>
    </ligand>
</feature>
<feature type="binding site" evidence="1">
    <location>
        <position position="224"/>
    </location>
    <ligand>
        <name>GTP</name>
        <dbReference type="ChEBI" id="CHEBI:37565"/>
    </ligand>
</feature>
<feature type="binding site" evidence="1">
    <location>
        <position position="228"/>
    </location>
    <ligand>
        <name>GTP</name>
        <dbReference type="ChEBI" id="CHEBI:37565"/>
    </ligand>
</feature>
<feature type="binding site" evidence="1">
    <location>
        <position position="252"/>
    </location>
    <ligand>
        <name>GTP</name>
        <dbReference type="ChEBI" id="CHEBI:37565"/>
    </ligand>
</feature>
<feature type="site" description="Involved in polymerization">
    <location>
        <position position="451"/>
    </location>
</feature>
<feature type="modified residue" description="N6-acetyllysine" evidence="4">
    <location>
        <position position="40"/>
    </location>
</feature>
<feature type="modified residue" description="3'-nitrotyrosine" evidence="3">
    <location>
        <position position="282"/>
    </location>
</feature>
<feature type="modified residue" description="Phosphoserine" evidence="3">
    <location>
        <position position="439"/>
    </location>
</feature>
<feature type="modified residue" description="5-glutamyl polyglutamate" evidence="4">
    <location>
        <position position="443"/>
    </location>
</feature>
<feature type="modified residue" description="5-glutamyl polyglutamate" evidence="2">
    <location>
        <position position="445"/>
    </location>
</feature>
<feature type="modified residue" description="3'-nitrotyrosine" evidence="4">
    <location>
        <position position="451"/>
    </location>
</feature>
<feature type="sequence conflict" description="In Ref. 3; AAH62238." evidence="7" ref="3">
    <original>K</original>
    <variation>R</variation>
    <location>
        <position position="326"/>
    </location>
</feature>
<feature type="sequence conflict" description="In Ref. 5; CAA24536." evidence="7" ref="5">
    <original>T</original>
    <variation>S</variation>
    <location>
        <position position="340"/>
    </location>
</feature>
<organism>
    <name type="scientific">Rattus norvegicus</name>
    <name type="common">Rat</name>
    <dbReference type="NCBI Taxonomy" id="10116"/>
    <lineage>
        <taxon>Eukaryota</taxon>
        <taxon>Metazoa</taxon>
        <taxon>Chordata</taxon>
        <taxon>Craniata</taxon>
        <taxon>Vertebrata</taxon>
        <taxon>Euteleostomi</taxon>
        <taxon>Mammalia</taxon>
        <taxon>Eutheria</taxon>
        <taxon>Euarchontoglires</taxon>
        <taxon>Glires</taxon>
        <taxon>Rodentia</taxon>
        <taxon>Myomorpha</taxon>
        <taxon>Muroidea</taxon>
        <taxon>Muridae</taxon>
        <taxon>Murinae</taxon>
        <taxon>Rattus</taxon>
    </lineage>
</organism>
<proteinExistence type="evidence at protein level"/>
<name>TBA1A_RAT</name>
<protein>
    <recommendedName>
        <fullName>Tubulin alpha-1A chain</fullName>
        <ecNumber evidence="1">3.6.5.-</ecNumber>
    </recommendedName>
    <alternativeName>
        <fullName>Alpha-tubulin 1</fullName>
    </alternativeName>
    <alternativeName>
        <fullName>Tubulin alpha-1 chain</fullName>
    </alternativeName>
    <component>
        <recommendedName>
            <fullName>Detyrosinated tubulin alpha-1A chain</fullName>
        </recommendedName>
    </component>
</protein>
<comment type="function">
    <text evidence="1">Tubulin is the major constituent of microtubules, protein filaments consisting of alpha- and beta-tubulin heterodimers (By similarity). Microtubules grow by the addition of GTP-tubulin dimers to the microtubule end, where a stabilizing cap forms (By similarity). Below the cap, tubulin dimers are in GDP-bound state, owing to GTPase activity of alpha-tubulin (By similarity).</text>
</comment>
<comment type="catalytic activity">
    <reaction evidence="1">
        <text>GTP + H2O = GDP + phosphate + H(+)</text>
        <dbReference type="Rhea" id="RHEA:19669"/>
        <dbReference type="ChEBI" id="CHEBI:15377"/>
        <dbReference type="ChEBI" id="CHEBI:15378"/>
        <dbReference type="ChEBI" id="CHEBI:37565"/>
        <dbReference type="ChEBI" id="CHEBI:43474"/>
        <dbReference type="ChEBI" id="CHEBI:58189"/>
    </reaction>
    <physiologicalReaction direction="left-to-right" evidence="1">
        <dbReference type="Rhea" id="RHEA:19670"/>
    </physiologicalReaction>
</comment>
<comment type="cofactor">
    <cofactor evidence="1">
        <name>Mg(2+)</name>
        <dbReference type="ChEBI" id="CHEBI:18420"/>
    </cofactor>
</comment>
<comment type="subunit">
    <text evidence="1 2">Heterodimer of alpha- and beta-tubulin (By similarity). A typical microtubule is a hollow water-filled tube with an outer diameter of 25 nm and an inner diameter of 15 nM (By similarity). Alpha-beta heterodimers associate head-to-tail to form protofilaments running lengthwise along the microtubule wall with the beta-tubulin subunit facing the microtubule plus end conferring a structural polarity (By similarity). Microtubules usually have 13 protofilaments but different protofilament numbers can be found in some organisms and specialized cells (By similarity). Interacts with gamma-tubulin; the interaction allows microtubules to nucleate from the gamma-tubulin ring complex (gTuRC) (By similarity). Nascent microtubule interacts (via alpha-tubulin MREC motif) with TTC5/STRAP; this interaction may result in tubulin mRNA-targeted degradation (By similarity). Component of sperm flagellar doublet microtubules (By similarity).</text>
</comment>
<comment type="subcellular location">
    <subcellularLocation>
        <location>Cytoplasm</location>
        <location>Cytoskeleton</location>
    </subcellularLocation>
    <subcellularLocation>
        <location evidence="2">Cytoplasm</location>
        <location evidence="2">Cytoskeleton</location>
        <location evidence="2">Flagellum axoneme</location>
    </subcellularLocation>
</comment>
<comment type="PTM">
    <text evidence="2">Some glutamate residues at the C-terminus are polyglycylated, resulting in polyglycine chains on the gamma-carboxyl group. Glycylation is mainly limited to tubulin incorporated into axonemes (cilia and flagella) whereas glutamylation is prevalent in neuronal cells, centrioles, axonemes, and the mitotic spindle. Both modifications can coexist on the same protein on adjacent residues, and lowering polyglycylation levels increases polyglutamylation, and reciprocally. Cilia and flagella glycylation is required for their stability and maintenance. Flagella glycylation controls sperm motility.</text>
</comment>
<comment type="PTM">
    <text evidence="2 4">Some glutamate residues at the C-terminus are polyglutamylated, resulting in polyglutamate chains on the gamma-carboxyl group (By similarity). Polyglutamylation plays a key role in microtubule severing by spastin (SPAST). SPAST preferentially recognizes and acts on microtubules decorated with short polyglutamate tails: severing activity by SPAST increases as the number of glutamates per tubulin rises from one to eight, but decreases beyond this glutamylation threshold (By similarity). Glutamylation is also involved in cilia motility (By similarity).</text>
</comment>
<comment type="PTM">
    <text evidence="4">Acetylation of alpha chains at Lys-40 is located inside the microtubule lumen. This modification has been correlated with increased microtubule stability, intracellular transport and ciliary assembly.</text>
</comment>
<comment type="PTM">
    <text evidence="1">Methylation of alpha chains at Lys-40 is found in mitotic microtubules and is required for normal mitosis and cytokinesis contributing to genomic stability.</text>
</comment>
<comment type="PTM">
    <text evidence="4">Nitration of Tyr-451 is irreversible and interferes with normal dynein intracellular distribution.</text>
</comment>
<comment type="PTM">
    <text evidence="6">Undergoes a tyrosination/detyrosination cycle, the cyclic removal and re-addition of a C-terminal tyrosine residue by the enzymes tubulin tyrosine carboxypeptidase (MATCAP1, VASH1 or VASH2) and tubulin tyrosine ligase (TTL), respectively.</text>
</comment>
<comment type="PTM">
    <molecule>Tubulin alpha-1A chain</molecule>
    <text evidence="2 4">Tyrosination promotes microtubule interaction with CAP-Gly domain-containing proteins such as CLIP1, CLIP2 and DCTN1 (By similarity). Tyrosination regulates the initiation of dynein-dynactin motility via interaction with DCTN1, which brings the dynein-dynactin complex into contact with microtubules. In neurons, tyrosinated tubulins mediate the initiation of retrograde vesicle transport (By similarity).</text>
</comment>
<comment type="PTM">
    <molecule>Detyrosinated tubulin alpha-1A chain</molecule>
    <text evidence="2 4">Detyrosination is involved in metaphase plate congression by guiding chromosomes during mitosis: detyrosination promotes interaction with CENPE, promoting pole-proximal transport of chromosomes toward the equator (By similarity). Detyrosination increases microtubules-dependent mechanotransduction in dystrophic cardiac and skeletal muscle. In cardiomyocytes, detyrosinated microtubules are required to resist to contractile compression during contraction: detyrosination promotes association with desmin (DES) at force-generating sarcomeres, leading to buckled microtubules and mechanical resistance to contraction (By similarity).</text>
</comment>
<comment type="similarity">
    <text evidence="7">Belongs to the tubulin family.</text>
</comment>
<sequence length="451" mass="50136">MRECISIHVGQAGVQIGNACWELYCLEHGIQPDGQMPSDKTIGGGDDSFNTFFSETGAGKHVPRAVFVDLEPTVIDEVRTGTYRQLFHPEQLITGKEDAANNYARGHYTIGKEIIDLVLDRIRKLADQCTGLQGFLVFHSFGGGTGSGFTSLLMERLSVDYGKKSKLEFSIYPAPQVSTAVVEPYNSILTTHTTLEHSDCAFMVDNEAIYDICRRNLDIERPTYTNLNRLIGQIVSSITASLRFDGALNVDLTEFQTNLVPYPRIHFPLATYAPVISAEKAYHEQLSVAEITNACFEPANQMVKCDPRHGKYMACCLLYRGDVVPKDVNAAIATIKTKRTIQFVDWCPTGFKVGINYQPPTVVPGGDLAKVQRAVCMLSNTTAIAEAWARLDHKFDLMYAKRAFVHWYVGEGMEEGEFSEAREDMAALEKDYEEVGVDSVEGEGEEEGEEY</sequence>
<keyword id="KW-0007">Acetylation</keyword>
<keyword id="KW-0966">Cell projection</keyword>
<keyword id="KW-0969">Cilium</keyword>
<keyword id="KW-0963">Cytoplasm</keyword>
<keyword id="KW-0206">Cytoskeleton</keyword>
<keyword id="KW-0903">Direct protein sequencing</keyword>
<keyword id="KW-0282">Flagellum</keyword>
<keyword id="KW-0342">GTP-binding</keyword>
<keyword id="KW-0378">Hydrolase</keyword>
<keyword id="KW-1017">Isopeptide bond</keyword>
<keyword id="KW-0460">Magnesium</keyword>
<keyword id="KW-0479">Metal-binding</keyword>
<keyword id="KW-0488">Methylation</keyword>
<keyword id="KW-0493">Microtubule</keyword>
<keyword id="KW-0944">Nitration</keyword>
<keyword id="KW-0547">Nucleotide-binding</keyword>
<keyword id="KW-0597">Phosphoprotein</keyword>
<keyword id="KW-1185">Reference proteome</keyword>
<accession>P68370</accession>
<accession>P02551</accession>
<accession>P05210</accession>
<accession>P05212</accession>
<accession>Q6P6G6</accession>
<reference key="1">
    <citation type="journal article" date="1981" name="J. Mol. Biol.">
        <title>Nucleotide sequence and evolution of a mammalian alpha-tubulin messenger RNA.</title>
        <authorList>
            <person name="Lemischka I.R."/>
            <person name="Farmer S."/>
            <person name="Racaniello V.R."/>
            <person name="Sharp P.A."/>
        </authorList>
    </citation>
    <scope>NUCLEOTIDE SEQUENCE [MRNA]</scope>
</reference>
<reference key="2">
    <citation type="journal article" date="1982" name="Nature">
        <title>The sequences of an expressed rat alpha-tubulin gene and a pseudogene with an inserted repetitive element.</title>
        <authorList>
            <person name="Lemischka I."/>
            <person name="Sharp P.A."/>
        </authorList>
    </citation>
    <scope>NUCLEOTIDE SEQUENCE [GENOMIC DNA]</scope>
</reference>
<reference key="3">
    <citation type="journal article" date="2004" name="Genome Res.">
        <title>The status, quality, and expansion of the NIH full-length cDNA project: the Mammalian Gene Collection (MGC).</title>
        <authorList>
            <consortium name="The MGC Project Team"/>
        </authorList>
    </citation>
    <scope>NUCLEOTIDE SEQUENCE [LARGE SCALE MRNA]</scope>
    <source>
        <tissue>Kidney</tissue>
        <tissue>Pituitary</tissue>
        <tissue>Testis</tissue>
    </source>
</reference>
<reference key="4">
    <citation type="submission" date="2007-07" db="UniProtKB">
        <authorList>
            <person name="Lubec G."/>
            <person name="Chen W.-Q."/>
            <person name="Afjehi-Sadat L."/>
            <person name="Yang J.W."/>
            <person name="Zigmond M."/>
        </authorList>
    </citation>
    <scope>PROTEIN SEQUENCE OF 41-60; 65-79; 85-96; 113-121; 216-280; 312-320; 340-370; 391-401 AND 403-422</scope>
    <scope>IDENTIFICATION BY MASS SPECTROMETRY</scope>
    <source>
        <strain>Sprague-Dawley</strain>
        <tissue>Brain</tissue>
        <tissue>Hippocampus</tissue>
        <tissue>Spinal cord</tissue>
    </source>
</reference>
<reference key="5">
    <citation type="journal article" date="1981" name="Nucleic Acids Res.">
        <title>The nucleotide sequence of rat alpha-tubulin: 3'-end characteristics, and evolutionary conservation.</title>
        <authorList>
            <person name="Ginzburg I."/>
            <person name="Behar L."/>
            <person name="Givol D."/>
            <person name="Littauer U.Z."/>
        </authorList>
    </citation>
    <scope>NUCLEOTIDE SEQUENCE [MRNA] OF 307-451</scope>
</reference>
<reference key="6">
    <citation type="journal article" date="1997" name="Dev. Growth Differ.">
        <title>Tubulin tyrosine ligase: protein and mRNA expression in developing rat skeletal muscle.</title>
        <authorList>
            <person name="Arregui C.O."/>
            <person name="Mas C.R."/>
            <person name="Argarana C.E."/>
            <person name="Barra H.S."/>
        </authorList>
    </citation>
    <scope>TYROSINATION</scope>
</reference>
<gene>
    <name type="primary">Tuba1a</name>
    <name type="synonym">Tuba1</name>
</gene>
<dbReference type="EC" id="3.6.5.-" evidence="1"/>
<dbReference type="EMBL" id="V01227">
    <property type="protein sequence ID" value="CAA24537.1"/>
    <property type="molecule type" value="mRNA"/>
</dbReference>
<dbReference type="EMBL" id="J00798">
    <property type="protein sequence ID" value="AAA42306.1"/>
    <property type="molecule type" value="Genomic_DNA"/>
</dbReference>
<dbReference type="EMBL" id="J00797">
    <property type="protein sequence ID" value="AAA42306.1"/>
    <property type="status" value="JOINED"/>
    <property type="molecule type" value="Genomic_DNA"/>
</dbReference>
<dbReference type="EMBL" id="BC062238">
    <property type="protein sequence ID" value="AAH62238.1"/>
    <property type="molecule type" value="mRNA"/>
</dbReference>
<dbReference type="EMBL" id="BC078830">
    <property type="protein sequence ID" value="AAH78830.1"/>
    <property type="molecule type" value="mRNA"/>
</dbReference>
<dbReference type="EMBL" id="V01226">
    <property type="protein sequence ID" value="CAA24536.1"/>
    <property type="molecule type" value="mRNA"/>
</dbReference>
<dbReference type="PIR" id="A92869">
    <property type="entry name" value="UBRTA"/>
</dbReference>
<dbReference type="RefSeq" id="NP_071634.1">
    <property type="nucleotide sequence ID" value="NM_022298.1"/>
</dbReference>
<dbReference type="RefSeq" id="XP_063120275.1">
    <property type="nucleotide sequence ID" value="XM_063264205.1"/>
</dbReference>
<dbReference type="RefSeq" id="XP_063120276.1">
    <property type="nucleotide sequence ID" value="XM_063264206.1"/>
</dbReference>
<dbReference type="RefSeq" id="XP_063120277.1">
    <property type="nucleotide sequence ID" value="XM_063264207.1"/>
</dbReference>
<dbReference type="SMR" id="P68370"/>
<dbReference type="BioGRID" id="248985">
    <property type="interactions" value="27"/>
</dbReference>
<dbReference type="CORUM" id="P68370"/>
<dbReference type="FunCoup" id="P68370">
    <property type="interactions" value="1707"/>
</dbReference>
<dbReference type="IntAct" id="P68370">
    <property type="interactions" value="8"/>
</dbReference>
<dbReference type="MINT" id="P68370"/>
<dbReference type="STRING" id="10116.ENSRNOP00000075232"/>
<dbReference type="BindingDB" id="P68370"/>
<dbReference type="ChEMBL" id="CHEMBL4139"/>
<dbReference type="DrugCentral" id="P68370"/>
<dbReference type="GlyGen" id="P68370">
    <property type="glycosylation" value="1 site, 1 O-linked glycan (1 site)"/>
</dbReference>
<dbReference type="iPTMnet" id="P68370"/>
<dbReference type="PhosphoSitePlus" id="P68370"/>
<dbReference type="jPOST" id="P68370"/>
<dbReference type="PaxDb" id="10116-ENSRNOP00000006322"/>
<dbReference type="GeneID" id="64158"/>
<dbReference type="KEGG" id="rno:64158"/>
<dbReference type="UCSC" id="RGD:619717">
    <property type="organism name" value="rat"/>
</dbReference>
<dbReference type="AGR" id="RGD:619717"/>
<dbReference type="CTD" id="7846"/>
<dbReference type="RGD" id="619717">
    <property type="gene designation" value="Tuba1a"/>
</dbReference>
<dbReference type="VEuPathDB" id="HostDB:ENSRNOG00000053468"/>
<dbReference type="eggNOG" id="KOG1376">
    <property type="taxonomic scope" value="Eukaryota"/>
</dbReference>
<dbReference type="HOGENOM" id="CLU_015718_0_0_1"/>
<dbReference type="InParanoid" id="P68370"/>
<dbReference type="OrthoDB" id="1844at2759"/>
<dbReference type="PhylomeDB" id="P68370"/>
<dbReference type="TreeFam" id="TF300314"/>
<dbReference type="Reactome" id="R-RNO-190840">
    <property type="pathway name" value="Microtubule-dependent trafficking of connexons from Golgi to the plasma membrane"/>
</dbReference>
<dbReference type="Reactome" id="R-RNO-2132295">
    <property type="pathway name" value="MHC class II antigen presentation"/>
</dbReference>
<dbReference type="Reactome" id="R-RNO-2467813">
    <property type="pathway name" value="Separation of Sister Chromatids"/>
</dbReference>
<dbReference type="Reactome" id="R-RNO-2500257">
    <property type="pathway name" value="Resolution of Sister Chromatid Cohesion"/>
</dbReference>
<dbReference type="Reactome" id="R-RNO-2565942">
    <property type="pathway name" value="Regulation of PLK1 Activity at G2/M Transition"/>
</dbReference>
<dbReference type="Reactome" id="R-RNO-3371497">
    <property type="pathway name" value="HSP90 chaperone cycle for steroid hormone receptors (SHR) in the presence of ligand"/>
</dbReference>
<dbReference type="Reactome" id="R-RNO-380259">
    <property type="pathway name" value="Loss of Nlp from mitotic centrosomes"/>
</dbReference>
<dbReference type="Reactome" id="R-RNO-380270">
    <property type="pathway name" value="Recruitment of mitotic centrosome proteins and complexes"/>
</dbReference>
<dbReference type="Reactome" id="R-RNO-380284">
    <property type="pathway name" value="Loss of proteins required for interphase microtubule organization from the centrosome"/>
</dbReference>
<dbReference type="Reactome" id="R-RNO-380320">
    <property type="pathway name" value="Recruitment of NuMA to mitotic centrosomes"/>
</dbReference>
<dbReference type="Reactome" id="R-RNO-437239">
    <property type="pathway name" value="Recycling pathway of L1"/>
</dbReference>
<dbReference type="Reactome" id="R-RNO-5610787">
    <property type="pathway name" value="Hedgehog 'off' state"/>
</dbReference>
<dbReference type="Reactome" id="R-RNO-5617833">
    <property type="pathway name" value="Cilium Assembly"/>
</dbReference>
<dbReference type="Reactome" id="R-RNO-5620912">
    <property type="pathway name" value="Anchoring of the basal body to the plasma membrane"/>
</dbReference>
<dbReference type="Reactome" id="R-RNO-5620924">
    <property type="pathway name" value="Intraflagellar transport"/>
</dbReference>
<dbReference type="Reactome" id="R-RNO-5626467">
    <property type="pathway name" value="RHO GTPases activate IQGAPs"/>
</dbReference>
<dbReference type="Reactome" id="R-RNO-5663220">
    <property type="pathway name" value="RHO GTPases Activate Formins"/>
</dbReference>
<dbReference type="Reactome" id="R-RNO-6807878">
    <property type="pathway name" value="COPI-mediated anterograde transport"/>
</dbReference>
<dbReference type="Reactome" id="R-RNO-6811434">
    <property type="pathway name" value="COPI-dependent Golgi-to-ER retrograde traffic"/>
</dbReference>
<dbReference type="Reactome" id="R-RNO-6811436">
    <property type="pathway name" value="COPI-independent Golgi-to-ER retrograde traffic"/>
</dbReference>
<dbReference type="Reactome" id="R-RNO-68877">
    <property type="pathway name" value="Mitotic Prometaphase"/>
</dbReference>
<dbReference type="Reactome" id="R-RNO-8852276">
    <property type="pathway name" value="The role of GTSE1 in G2/M progression after G2 checkpoint"/>
</dbReference>
<dbReference type="Reactome" id="R-RNO-8854518">
    <property type="pathway name" value="AURKA Activation by TPX2"/>
</dbReference>
<dbReference type="Reactome" id="R-RNO-8955332">
    <property type="pathway name" value="Carboxyterminal post-translational modifications of tubulin"/>
</dbReference>
<dbReference type="Reactome" id="R-RNO-9646399">
    <property type="pathway name" value="Aggrephagy"/>
</dbReference>
<dbReference type="Reactome" id="R-RNO-9648025">
    <property type="pathway name" value="EML4 and NUDC in mitotic spindle formation"/>
</dbReference>
<dbReference type="Reactome" id="R-RNO-9668328">
    <property type="pathway name" value="Sealing of the nuclear envelope (NE) by ESCRT-III"/>
</dbReference>
<dbReference type="Reactome" id="R-RNO-983189">
    <property type="pathway name" value="Kinesins"/>
</dbReference>
<dbReference type="Reactome" id="R-RNO-9833482">
    <property type="pathway name" value="PKR-mediated signaling"/>
</dbReference>
<dbReference type="PRO" id="PR:P68370"/>
<dbReference type="Proteomes" id="UP000002494">
    <property type="component" value="Chromosome 7"/>
</dbReference>
<dbReference type="Bgee" id="ENSRNOG00000060728">
    <property type="expression patterns" value="Expressed in Ammon's horn and 19 other cell types or tissues"/>
</dbReference>
<dbReference type="GO" id="GO:0005879">
    <property type="term" value="C:axonemal microtubule"/>
    <property type="evidence" value="ECO:0000266"/>
    <property type="project" value="RGD"/>
</dbReference>
<dbReference type="GO" id="GO:0000793">
    <property type="term" value="C:condensed chromosome"/>
    <property type="evidence" value="ECO:0000266"/>
    <property type="project" value="RGD"/>
</dbReference>
<dbReference type="GO" id="GO:0005737">
    <property type="term" value="C:cytoplasm"/>
    <property type="evidence" value="ECO:0000318"/>
    <property type="project" value="GO_Central"/>
</dbReference>
<dbReference type="GO" id="GO:0005881">
    <property type="term" value="C:cytoplasmic microtubule"/>
    <property type="evidence" value="ECO:0000266"/>
    <property type="project" value="RGD"/>
</dbReference>
<dbReference type="GO" id="GO:0036464">
    <property type="term" value="C:cytoplasmic ribonucleoprotein granule"/>
    <property type="evidence" value="ECO:0000266"/>
    <property type="project" value="RGD"/>
</dbReference>
<dbReference type="GO" id="GO:0005829">
    <property type="term" value="C:cytosol"/>
    <property type="evidence" value="ECO:0000266"/>
    <property type="project" value="RGD"/>
</dbReference>
<dbReference type="GO" id="GO:0045121">
    <property type="term" value="C:membrane raft"/>
    <property type="evidence" value="ECO:0000314"/>
    <property type="project" value="CAFA"/>
</dbReference>
<dbReference type="GO" id="GO:0005874">
    <property type="term" value="C:microtubule"/>
    <property type="evidence" value="ECO:0000266"/>
    <property type="project" value="RGD"/>
</dbReference>
<dbReference type="GO" id="GO:0043209">
    <property type="term" value="C:myelin sheath"/>
    <property type="evidence" value="ECO:0000314"/>
    <property type="project" value="UniProtKB"/>
</dbReference>
<dbReference type="GO" id="GO:0031594">
    <property type="term" value="C:neuromuscular junction"/>
    <property type="evidence" value="ECO:0000266"/>
    <property type="project" value="RGD"/>
</dbReference>
<dbReference type="GO" id="GO:0005886">
    <property type="term" value="C:plasma membrane"/>
    <property type="evidence" value="ECO:0000266"/>
    <property type="project" value="RGD"/>
</dbReference>
<dbReference type="GO" id="GO:0055037">
    <property type="term" value="C:recycling endosome"/>
    <property type="evidence" value="ECO:0000266"/>
    <property type="project" value="RGD"/>
</dbReference>
<dbReference type="GO" id="GO:0036126">
    <property type="term" value="C:sperm flagellum"/>
    <property type="evidence" value="ECO:0000266"/>
    <property type="project" value="RGD"/>
</dbReference>
<dbReference type="GO" id="GO:0045202">
    <property type="term" value="C:synapse"/>
    <property type="evidence" value="ECO:0000266"/>
    <property type="project" value="RGD"/>
</dbReference>
<dbReference type="GO" id="GO:0005525">
    <property type="term" value="F:GTP binding"/>
    <property type="evidence" value="ECO:0000266"/>
    <property type="project" value="RGD"/>
</dbReference>
<dbReference type="GO" id="GO:0016787">
    <property type="term" value="F:hydrolase activity"/>
    <property type="evidence" value="ECO:0007669"/>
    <property type="project" value="UniProtKB-KW"/>
</dbReference>
<dbReference type="GO" id="GO:0042802">
    <property type="term" value="F:identical protein binding"/>
    <property type="evidence" value="ECO:0000266"/>
    <property type="project" value="RGD"/>
</dbReference>
<dbReference type="GO" id="GO:0046872">
    <property type="term" value="F:metal ion binding"/>
    <property type="evidence" value="ECO:0007669"/>
    <property type="project" value="UniProtKB-KW"/>
</dbReference>
<dbReference type="GO" id="GO:0019904">
    <property type="term" value="F:protein domain specific binding"/>
    <property type="evidence" value="ECO:0000314"/>
    <property type="project" value="RGD"/>
</dbReference>
<dbReference type="GO" id="GO:0046982">
    <property type="term" value="F:protein heterodimerization activity"/>
    <property type="evidence" value="ECO:0000266"/>
    <property type="project" value="RGD"/>
</dbReference>
<dbReference type="GO" id="GO:0044877">
    <property type="term" value="F:protein-containing complex binding"/>
    <property type="evidence" value="ECO:0000266"/>
    <property type="project" value="RGD"/>
</dbReference>
<dbReference type="GO" id="GO:0005200">
    <property type="term" value="F:structural constituent of cytoskeleton"/>
    <property type="evidence" value="ECO:0000318"/>
    <property type="project" value="GO_Central"/>
</dbReference>
<dbReference type="GO" id="GO:0030534">
    <property type="term" value="P:adult behavior"/>
    <property type="evidence" value="ECO:0000266"/>
    <property type="project" value="RGD"/>
</dbReference>
<dbReference type="GO" id="GO:0008344">
    <property type="term" value="P:adult locomotory behavior"/>
    <property type="evidence" value="ECO:0000266"/>
    <property type="project" value="RGD"/>
</dbReference>
<dbReference type="GO" id="GO:0071277">
    <property type="term" value="P:cellular response to calcium ion"/>
    <property type="evidence" value="ECO:0000266"/>
    <property type="project" value="RGD"/>
</dbReference>
<dbReference type="GO" id="GO:0007098">
    <property type="term" value="P:centrosome cycle"/>
    <property type="evidence" value="ECO:0000266"/>
    <property type="project" value="RGD"/>
</dbReference>
<dbReference type="GO" id="GO:0021696">
    <property type="term" value="P:cerebellar cortex morphogenesis"/>
    <property type="evidence" value="ECO:0000266"/>
    <property type="project" value="RGD"/>
</dbReference>
<dbReference type="GO" id="GO:0021987">
    <property type="term" value="P:cerebral cortex development"/>
    <property type="evidence" value="ECO:0000266"/>
    <property type="project" value="RGD"/>
</dbReference>
<dbReference type="GO" id="GO:0021542">
    <property type="term" value="P:dentate gyrus development"/>
    <property type="evidence" value="ECO:0000266"/>
    <property type="project" value="RGD"/>
</dbReference>
<dbReference type="GO" id="GO:0030317">
    <property type="term" value="P:flagellated sperm motility"/>
    <property type="evidence" value="ECO:0000266"/>
    <property type="project" value="RGD"/>
</dbReference>
<dbReference type="GO" id="GO:0048853">
    <property type="term" value="P:forebrain morphogenesis"/>
    <property type="evidence" value="ECO:0000266"/>
    <property type="project" value="RGD"/>
</dbReference>
<dbReference type="GO" id="GO:0010467">
    <property type="term" value="P:gene expression"/>
    <property type="evidence" value="ECO:0000266"/>
    <property type="project" value="RGD"/>
</dbReference>
<dbReference type="GO" id="GO:0010001">
    <property type="term" value="P:glial cell differentiation"/>
    <property type="evidence" value="ECO:0000266"/>
    <property type="project" value="RGD"/>
</dbReference>
<dbReference type="GO" id="GO:0021766">
    <property type="term" value="P:hippocampus development"/>
    <property type="evidence" value="ECO:0000266"/>
    <property type="project" value="RGD"/>
</dbReference>
<dbReference type="GO" id="GO:0048873">
    <property type="term" value="P:homeostasis of number of cells within a tissue"/>
    <property type="evidence" value="ECO:0000266"/>
    <property type="project" value="RGD"/>
</dbReference>
<dbReference type="GO" id="GO:0006886">
    <property type="term" value="P:intracellular protein transport"/>
    <property type="evidence" value="ECO:0000266"/>
    <property type="project" value="RGD"/>
</dbReference>
<dbReference type="GO" id="GO:0007626">
    <property type="term" value="P:locomotory behavior"/>
    <property type="evidence" value="ECO:0000266"/>
    <property type="project" value="RGD"/>
</dbReference>
<dbReference type="GO" id="GO:0035641">
    <property type="term" value="P:locomotory exploration behavior"/>
    <property type="evidence" value="ECO:0000266"/>
    <property type="project" value="RGD"/>
</dbReference>
<dbReference type="GO" id="GO:0007613">
    <property type="term" value="P:memory"/>
    <property type="evidence" value="ECO:0000266"/>
    <property type="project" value="RGD"/>
</dbReference>
<dbReference type="GO" id="GO:0000226">
    <property type="term" value="P:microtubule cytoskeleton organization"/>
    <property type="evidence" value="ECO:0000266"/>
    <property type="project" value="RGD"/>
</dbReference>
<dbReference type="GO" id="GO:0046785">
    <property type="term" value="P:microtubule polymerization"/>
    <property type="evidence" value="ECO:0000266"/>
    <property type="project" value="RGD"/>
</dbReference>
<dbReference type="GO" id="GO:0007017">
    <property type="term" value="P:microtubule-based process"/>
    <property type="evidence" value="ECO:0000304"/>
    <property type="project" value="RGD"/>
</dbReference>
<dbReference type="GO" id="GO:0000278">
    <property type="term" value="P:mitotic cell cycle"/>
    <property type="evidence" value="ECO:0000318"/>
    <property type="project" value="GO_Central"/>
</dbReference>
<dbReference type="GO" id="GO:0061744">
    <property type="term" value="P:motor behavior"/>
    <property type="evidence" value="ECO:0000266"/>
    <property type="project" value="RGD"/>
</dbReference>
<dbReference type="GO" id="GO:0022008">
    <property type="term" value="P:neurogenesis"/>
    <property type="evidence" value="ECO:0000266"/>
    <property type="project" value="RGD"/>
</dbReference>
<dbReference type="GO" id="GO:0051402">
    <property type="term" value="P:neuron apoptotic process"/>
    <property type="evidence" value="ECO:0000266"/>
    <property type="project" value="RGD"/>
</dbReference>
<dbReference type="GO" id="GO:0030182">
    <property type="term" value="P:neuron differentiation"/>
    <property type="evidence" value="ECO:0000266"/>
    <property type="project" value="RGD"/>
</dbReference>
<dbReference type="GO" id="GO:0001764">
    <property type="term" value="P:neuron migration"/>
    <property type="evidence" value="ECO:0000266"/>
    <property type="project" value="RGD"/>
</dbReference>
<dbReference type="GO" id="GO:0140058">
    <property type="term" value="P:neuron projection arborization"/>
    <property type="evidence" value="ECO:0000266"/>
    <property type="project" value="RGD"/>
</dbReference>
<dbReference type="GO" id="GO:0072384">
    <property type="term" value="P:organelle transport along microtubule"/>
    <property type="evidence" value="ECO:0000266"/>
    <property type="project" value="RGD"/>
</dbReference>
<dbReference type="GO" id="GO:0021859">
    <property type="term" value="P:pyramidal neuron differentiation"/>
    <property type="evidence" value="ECO:0000266"/>
    <property type="project" value="RGD"/>
</dbReference>
<dbReference type="GO" id="GO:0050807">
    <property type="term" value="P:regulation of synapse organization"/>
    <property type="evidence" value="ECO:0000266"/>
    <property type="project" value="RGD"/>
</dbReference>
<dbReference type="GO" id="GO:1902065">
    <property type="term" value="P:response to L-glutamate"/>
    <property type="evidence" value="ECO:0000266"/>
    <property type="project" value="RGD"/>
</dbReference>
<dbReference type="GO" id="GO:0009612">
    <property type="term" value="P:response to mechanical stimulus"/>
    <property type="evidence" value="ECO:0000266"/>
    <property type="project" value="RGD"/>
</dbReference>
<dbReference type="GO" id="GO:0034612">
    <property type="term" value="P:response to tumor necrosis factor"/>
    <property type="evidence" value="ECO:0000266"/>
    <property type="project" value="RGD"/>
</dbReference>
<dbReference type="GO" id="GO:0007224">
    <property type="term" value="P:smoothened signaling pathway"/>
    <property type="evidence" value="ECO:0000266"/>
    <property type="project" value="RGD"/>
</dbReference>
<dbReference type="GO" id="GO:0001964">
    <property type="term" value="P:startle response"/>
    <property type="evidence" value="ECO:0000266"/>
    <property type="project" value="RGD"/>
</dbReference>
<dbReference type="GO" id="GO:0050808">
    <property type="term" value="P:synapse organization"/>
    <property type="evidence" value="ECO:0000266"/>
    <property type="project" value="RGD"/>
</dbReference>
<dbReference type="GO" id="GO:0008542">
    <property type="term" value="P:visual learning"/>
    <property type="evidence" value="ECO:0000266"/>
    <property type="project" value="RGD"/>
</dbReference>
<dbReference type="CDD" id="cd02186">
    <property type="entry name" value="alpha_tubulin"/>
    <property type="match status" value="1"/>
</dbReference>
<dbReference type="FunFam" id="1.10.287.600:FF:000005">
    <property type="entry name" value="Tubulin alpha chain"/>
    <property type="match status" value="1"/>
</dbReference>
<dbReference type="FunFam" id="3.30.1330.20:FF:000001">
    <property type="entry name" value="Tubulin alpha chain"/>
    <property type="match status" value="1"/>
</dbReference>
<dbReference type="FunFam" id="3.40.50.1440:FF:000002">
    <property type="entry name" value="Tubulin alpha chain"/>
    <property type="match status" value="1"/>
</dbReference>
<dbReference type="Gene3D" id="1.10.287.600">
    <property type="entry name" value="Helix hairpin bin"/>
    <property type="match status" value="1"/>
</dbReference>
<dbReference type="Gene3D" id="3.30.1330.20">
    <property type="entry name" value="Tubulin/FtsZ, C-terminal domain"/>
    <property type="match status" value="1"/>
</dbReference>
<dbReference type="Gene3D" id="3.40.50.1440">
    <property type="entry name" value="Tubulin/FtsZ, GTPase domain"/>
    <property type="match status" value="1"/>
</dbReference>
<dbReference type="InterPro" id="IPR002452">
    <property type="entry name" value="Alpha_tubulin"/>
</dbReference>
<dbReference type="InterPro" id="IPR008280">
    <property type="entry name" value="Tub_FtsZ_C"/>
</dbReference>
<dbReference type="InterPro" id="IPR000217">
    <property type="entry name" value="Tubulin"/>
</dbReference>
<dbReference type="InterPro" id="IPR037103">
    <property type="entry name" value="Tubulin/FtsZ-like_C"/>
</dbReference>
<dbReference type="InterPro" id="IPR018316">
    <property type="entry name" value="Tubulin/FtsZ_2-layer-sand-dom"/>
</dbReference>
<dbReference type="InterPro" id="IPR036525">
    <property type="entry name" value="Tubulin/FtsZ_GTPase_sf"/>
</dbReference>
<dbReference type="InterPro" id="IPR023123">
    <property type="entry name" value="Tubulin_C"/>
</dbReference>
<dbReference type="InterPro" id="IPR017975">
    <property type="entry name" value="Tubulin_CS"/>
</dbReference>
<dbReference type="InterPro" id="IPR003008">
    <property type="entry name" value="Tubulin_FtsZ_GTPase"/>
</dbReference>
<dbReference type="PANTHER" id="PTHR11588">
    <property type="entry name" value="TUBULIN"/>
    <property type="match status" value="1"/>
</dbReference>
<dbReference type="Pfam" id="PF00091">
    <property type="entry name" value="Tubulin"/>
    <property type="match status" value="1"/>
</dbReference>
<dbReference type="Pfam" id="PF03953">
    <property type="entry name" value="Tubulin_C"/>
    <property type="match status" value="1"/>
</dbReference>
<dbReference type="PRINTS" id="PR01162">
    <property type="entry name" value="ALPHATUBULIN"/>
</dbReference>
<dbReference type="PRINTS" id="PR01161">
    <property type="entry name" value="TUBULIN"/>
</dbReference>
<dbReference type="SMART" id="SM00864">
    <property type="entry name" value="Tubulin"/>
    <property type="match status" value="1"/>
</dbReference>
<dbReference type="SMART" id="SM00865">
    <property type="entry name" value="Tubulin_C"/>
    <property type="match status" value="1"/>
</dbReference>
<dbReference type="SUPFAM" id="SSF55307">
    <property type="entry name" value="Tubulin C-terminal domain-like"/>
    <property type="match status" value="1"/>
</dbReference>
<dbReference type="SUPFAM" id="SSF52490">
    <property type="entry name" value="Tubulin nucleotide-binding domain-like"/>
    <property type="match status" value="1"/>
</dbReference>
<dbReference type="PROSITE" id="PS00227">
    <property type="entry name" value="TUBULIN"/>
    <property type="match status" value="1"/>
</dbReference>
<evidence type="ECO:0000250" key="1">
    <source>
        <dbReference type="UniProtKB" id="P68363"/>
    </source>
</evidence>
<evidence type="ECO:0000250" key="2">
    <source>
        <dbReference type="UniProtKB" id="P68369"/>
    </source>
</evidence>
<evidence type="ECO:0000250" key="3">
    <source>
        <dbReference type="UniProtKB" id="P68373"/>
    </source>
</evidence>
<evidence type="ECO:0000250" key="4">
    <source>
        <dbReference type="UniProtKB" id="Q71U36"/>
    </source>
</evidence>
<evidence type="ECO:0000256" key="5">
    <source>
        <dbReference type="SAM" id="MobiDB-lite"/>
    </source>
</evidence>
<evidence type="ECO:0000269" key="6">
    <source>
    </source>
</evidence>
<evidence type="ECO:0000305" key="7"/>